<comment type="function">
    <text>The function of this late gene protein is unknown.</text>
</comment>
<sequence length="163" mass="18315">MLQHHWNKPDLEARFPVNSVVRYSGGGLKRILGMSGVVTGHSHTGLVKVRFGTQYAEVLPNNLIPLPKADVKTPNVEAPKTEVKSDVTHPNHYMLFDNVEAIEVIARSMTVEAFRGYCLGNILKYRLRAGKKSELATMDKDLKKAAFYQELFDKHRGLCYDAS</sequence>
<gene>
    <name type="primary">1.7</name>
</gene>
<protein>
    <recommendedName>
        <fullName>Gene 1.7 protein</fullName>
    </recommendedName>
</protein>
<organismHost>
    <name type="scientific">Escherichia coli</name>
    <dbReference type="NCBI Taxonomy" id="562"/>
</organismHost>
<proteinExistence type="predicted"/>
<reference key="1">
    <citation type="journal article" date="1987" name="J. Mol. Biol.">
        <title>Sequence of a conditionally essential region of bacteriophage T3, including the primary origin of DNA replication.</title>
        <authorList>
            <person name="Schmitt M.P."/>
            <person name="Beck P.J."/>
            <person name="Kearney C.A."/>
            <person name="Spence J.L."/>
            <person name="Digiovanni D."/>
            <person name="Condreay J.P."/>
            <person name="Molineux I.J."/>
        </authorList>
    </citation>
    <scope>NUCLEOTIDE SEQUENCE [GENOMIC DNA]</scope>
    <source>
        <strain>Luria</strain>
    </source>
</reference>
<name>V17_BPT3</name>
<accession>P07719</accession>
<organism>
    <name type="scientific">Enterobacteria phage T3</name>
    <name type="common">Bacteriophage T3</name>
    <dbReference type="NCBI Taxonomy" id="10759"/>
    <lineage>
        <taxon>Viruses</taxon>
        <taxon>Duplodnaviria</taxon>
        <taxon>Heunggongvirae</taxon>
        <taxon>Uroviricota</taxon>
        <taxon>Caudoviricetes</taxon>
        <taxon>Autographiviridae</taxon>
        <taxon>Studiervirinae</taxon>
        <taxon>Teetrevirus</taxon>
        <taxon>Teetrevirus T3</taxon>
    </lineage>
</organism>
<feature type="chain" id="PRO_0000106476" description="Gene 1.7 protein">
    <location>
        <begin position="1"/>
        <end position="163"/>
    </location>
</feature>
<dbReference type="EMBL" id="X17255">
    <property type="protein sequence ID" value="CAA35128.1"/>
    <property type="molecule type" value="Genomic_DNA"/>
</dbReference>
<dbReference type="EMBL" id="X05031">
    <property type="protein sequence ID" value="CAA28703.1"/>
    <property type="molecule type" value="Genomic_DNA"/>
</dbReference>
<dbReference type="PIR" id="S07500">
    <property type="entry name" value="S07500"/>
</dbReference>
<dbReference type="RefSeq" id="NP_523308.1">
    <property type="nucleotide sequence ID" value="NC_003298.1"/>
</dbReference>
<dbReference type="KEGG" id="vg:927445"/>
<dbReference type="OrthoDB" id="10851at10239"/>
<dbReference type="InterPro" id="IPR021739">
    <property type="entry name" value="SaV-like"/>
</dbReference>
<dbReference type="Pfam" id="PF11753">
    <property type="entry name" value="DUF3310"/>
    <property type="match status" value="1"/>
</dbReference>
<keyword id="KW-0426">Late protein</keyword>